<sequence length="879" mass="101158">MALIDLEDKIAEIVNREDHSDFLYELLGVYDVPRATITRLKKGNQNLTKRVGEVHLKNKVWFKEAKKGKLFDALIDIEQQVEYLSAKPRYLLVTDYDGVLAKDTKTLEALDVKFEELPQYFDFFLAWKGIEKVEFEKENPADIKAAERFARIYDVLRKENNIIETNRGLDLFLIRLLFCFFAEDTDIFKRNSFTNLIKTLTEEDGSNLNKLFADLFIVLDKNERDDVPSYLKEFPYVNGQLFTEPHTELEFSAKSRKLIIECGELLNWAKINPDIFGSMIQAVASEESRSYLGMHYTSVPNIMKVIKPLFLDKLNQSFLDAYDDYTKLENLLTRIGKIKFFDPACGSGNFLIITYKELRRMEINIIKRLQELLGEYLYVPSVTLSQFYGIEIEDFAHDVAKLSLWIAEHQMNEELKNEVHNAVRPTLPLHTAGDIRCANAIRVEWTEVCPAQGSEEVYVFGNPPYLGSKKQNKEHKSDMLSIFGKVKNGKMLDYISAWFYFGAKYASTTNAKVAFVSTNSVTQGEQVSILWNELFKFGIQINFAYKSFKWANNAKNNAAVIVVIVGFGPLDTKVNKYLFVDETKKLVSNISPYLTDGENILVSSRTKPISDLPKLHFGNMPNDGGGLLFTITEYTDAINKYPELVPYFKKFIGSVEFINGGLRYCLWLNEAKYEKIKSNPLIQERISISKNHREKSTDKGTNKLALTPWKFRDTHETTNYSIVVPSVSSENRFYIPMGLAGADTILSNLIYVIYDAEIYLLGILMSRMHMTWVKAVAGRLKTDYRYSAGLCYNTFPIPELSTRRKNEIEEAILEILDLREEQGGTLAELYNPSTMPIELKVAHEKLDGIVERAYRQKQFESDEERLEVLLKLYQEMTER</sequence>
<protein>
    <recommendedName>
        <fullName evidence="3">DNA methyltransferase A</fullName>
        <shortName evidence="3">DnmA</shortName>
        <ecNumber evidence="5">2.1.1.72</ecNumber>
    </recommendedName>
    <alternativeName>
        <fullName evidence="3">Modification methylase M.Bsu3610I</fullName>
    </alternativeName>
    <alternativeName>
        <fullName evidence="3">Modification methylase M.BsuPY79I</fullName>
    </alternativeName>
    <alternativeName>
        <fullName evidence="2">Type II restriction enzyme and methyltransferase RM.BsuMORF6760P</fullName>
        <shortName evidence="2">RM.BsuMORF6760P</shortName>
    </alternativeName>
</protein>
<dbReference type="EC" id="2.1.1.72" evidence="5"/>
<dbReference type="EMBL" id="AF012532">
    <property type="protein sequence ID" value="AAB66474.1"/>
    <property type="molecule type" value="Genomic_DNA"/>
</dbReference>
<dbReference type="EMBL" id="AL009126">
    <property type="protein sequence ID" value="CAB12496.1"/>
    <property type="molecule type" value="Genomic_DNA"/>
</dbReference>
<dbReference type="PIR" id="E69792">
    <property type="entry name" value="E69792"/>
</dbReference>
<dbReference type="RefSeq" id="NP_388558.1">
    <property type="nucleotide sequence ID" value="NC_000964.3"/>
</dbReference>
<dbReference type="RefSeq" id="WP_003244282.1">
    <property type="nucleotide sequence ID" value="NZ_OZ025638.1"/>
</dbReference>
<dbReference type="SMR" id="O31504"/>
<dbReference type="FunCoup" id="O31504">
    <property type="interactions" value="233"/>
</dbReference>
<dbReference type="STRING" id="224308.BSU06760"/>
<dbReference type="REBASE" id="152661">
    <property type="entry name" value="Rph744ORF2800P"/>
</dbReference>
<dbReference type="REBASE" id="152662">
    <property type="entry name" value="Rph744ORF1045P"/>
</dbReference>
<dbReference type="REBASE" id="152669">
    <property type="entry name" value="Rph650ORF1113P"/>
</dbReference>
<dbReference type="REBASE" id="152676">
    <property type="entry name" value="Rph620ORF1068P"/>
</dbReference>
<dbReference type="REBASE" id="152678">
    <property type="entry name" value="Rph611ORF1113P"/>
</dbReference>
<dbReference type="REBASE" id="152720">
    <property type="entry name" value="Rph771ORF1051P"/>
</dbReference>
<dbReference type="REBASE" id="152725">
    <property type="entry name" value="Rph671ORF1051P"/>
</dbReference>
<dbReference type="REBASE" id="155510">
    <property type="entry name" value="VscVS05ORF1877P"/>
</dbReference>
<dbReference type="REBASE" id="157606">
    <property type="entry name" value="Rso10709ORF1235P"/>
</dbReference>
<dbReference type="REBASE" id="188610">
    <property type="entry name" value="AsoACEORF469P"/>
</dbReference>
<dbReference type="REBASE" id="191900">
    <property type="entry name" value="Apa1468ORF3364P"/>
</dbReference>
<dbReference type="REBASE" id="22098">
    <property type="entry name" value="BsuMORF6760P"/>
</dbReference>
<dbReference type="REBASE" id="394894">
    <property type="entry name" value="LpaCK401ORF2100P"/>
</dbReference>
<dbReference type="PaxDb" id="224308-BSU06760"/>
<dbReference type="DNASU" id="936059"/>
<dbReference type="EnsemblBacteria" id="CAB12496">
    <property type="protein sequence ID" value="CAB12496"/>
    <property type="gene ID" value="BSU_06760"/>
</dbReference>
<dbReference type="GeneID" id="936059"/>
<dbReference type="KEGG" id="bsu:BSU06760"/>
<dbReference type="PATRIC" id="fig|224308.179.peg.734"/>
<dbReference type="eggNOG" id="COG1002">
    <property type="taxonomic scope" value="Bacteria"/>
</dbReference>
<dbReference type="InParanoid" id="O31504"/>
<dbReference type="OrthoDB" id="32195at2"/>
<dbReference type="BioCyc" id="BSUB:BSU06760-MONOMER"/>
<dbReference type="PRO" id="PR:O31504"/>
<dbReference type="Proteomes" id="UP000001570">
    <property type="component" value="Chromosome"/>
</dbReference>
<dbReference type="GO" id="GO:0003677">
    <property type="term" value="F:DNA binding"/>
    <property type="evidence" value="ECO:0007669"/>
    <property type="project" value="UniProtKB-KW"/>
</dbReference>
<dbReference type="GO" id="GO:0009007">
    <property type="term" value="F:site-specific DNA-methyltransferase (adenine-specific) activity"/>
    <property type="evidence" value="ECO:0007669"/>
    <property type="project" value="RHEA"/>
</dbReference>
<dbReference type="GO" id="GO:0032259">
    <property type="term" value="P:methylation"/>
    <property type="evidence" value="ECO:0007669"/>
    <property type="project" value="UniProtKB-KW"/>
</dbReference>
<dbReference type="Gene3D" id="3.40.50.150">
    <property type="entry name" value="Vaccinia Virus protein VP39"/>
    <property type="match status" value="1"/>
</dbReference>
<dbReference type="InterPro" id="IPR046818">
    <property type="entry name" value="MmeI_C"/>
</dbReference>
<dbReference type="InterPro" id="IPR046819">
    <property type="entry name" value="MmeI_hel"/>
</dbReference>
<dbReference type="InterPro" id="IPR046816">
    <property type="entry name" value="MmeI_Mtase"/>
</dbReference>
<dbReference type="InterPro" id="IPR046817">
    <property type="entry name" value="MmeI_N"/>
</dbReference>
<dbReference type="InterPro" id="IPR046820">
    <property type="entry name" value="MmeI_TRD"/>
</dbReference>
<dbReference type="InterPro" id="IPR050953">
    <property type="entry name" value="N4_N6_ade-DNA_methylase"/>
</dbReference>
<dbReference type="InterPro" id="IPR029063">
    <property type="entry name" value="SAM-dependent_MTases_sf"/>
</dbReference>
<dbReference type="PANTHER" id="PTHR33841:SF1">
    <property type="entry name" value="DNA METHYLTRANSFERASE A"/>
    <property type="match status" value="1"/>
</dbReference>
<dbReference type="PANTHER" id="PTHR33841">
    <property type="entry name" value="DNA METHYLTRANSFERASE YEEA-RELATED"/>
    <property type="match status" value="1"/>
</dbReference>
<dbReference type="Pfam" id="PF20467">
    <property type="entry name" value="MmeI_C"/>
    <property type="match status" value="1"/>
</dbReference>
<dbReference type="Pfam" id="PF20465">
    <property type="entry name" value="MmeI_hel"/>
    <property type="match status" value="1"/>
</dbReference>
<dbReference type="Pfam" id="PF20473">
    <property type="entry name" value="MmeI_Mtase"/>
    <property type="match status" value="1"/>
</dbReference>
<dbReference type="Pfam" id="PF20464">
    <property type="entry name" value="MmeI_N"/>
    <property type="match status" value="1"/>
</dbReference>
<dbReference type="Pfam" id="PF20466">
    <property type="entry name" value="MmeI_TRD"/>
    <property type="match status" value="1"/>
</dbReference>
<dbReference type="SUPFAM" id="SSF53335">
    <property type="entry name" value="S-adenosyl-L-methionine-dependent methyltransferases"/>
    <property type="match status" value="1"/>
</dbReference>
<dbReference type="PROSITE" id="PS00092">
    <property type="entry name" value="N6_MTASE"/>
    <property type="match status" value="1"/>
</dbReference>
<evidence type="ECO:0000269" key="1">
    <source>
    </source>
</evidence>
<evidence type="ECO:0000303" key="2">
    <source>
    </source>
</evidence>
<evidence type="ECO:0000303" key="3">
    <source>
    </source>
</evidence>
<evidence type="ECO:0000305" key="4"/>
<evidence type="ECO:0000305" key="5">
    <source>
    </source>
</evidence>
<name>DNMA_BACSU</name>
<keyword id="KW-0238">DNA-binding</keyword>
<keyword id="KW-0489">Methyltransferase</keyword>
<keyword id="KW-1185">Reference proteome</keyword>
<keyword id="KW-0804">Transcription</keyword>
<keyword id="KW-0805">Transcription regulation</keyword>
<keyword id="KW-0808">Transferase</keyword>
<reference key="1">
    <citation type="submission" date="1997-07" db="EMBL/GenBank/DDBJ databases">
        <title>The 55-58 degree segment of the Bacillus subtilis chromosome, a region spanning from the purA gene cluster to the cotJ operon.</title>
        <authorList>
            <person name="Borriss R."/>
            <person name="Schroeter R."/>
        </authorList>
    </citation>
    <scope>NUCLEOTIDE SEQUENCE [GENOMIC DNA]</scope>
    <source>
        <strain>168</strain>
    </source>
</reference>
<reference key="2">
    <citation type="journal article" date="1997" name="Nature">
        <title>The complete genome sequence of the Gram-positive bacterium Bacillus subtilis.</title>
        <authorList>
            <person name="Kunst F."/>
            <person name="Ogasawara N."/>
            <person name="Moszer I."/>
            <person name="Albertini A.M."/>
            <person name="Alloni G."/>
            <person name="Azevedo V."/>
            <person name="Bertero M.G."/>
            <person name="Bessieres P."/>
            <person name="Bolotin A."/>
            <person name="Borchert S."/>
            <person name="Borriss R."/>
            <person name="Boursier L."/>
            <person name="Brans A."/>
            <person name="Braun M."/>
            <person name="Brignell S.C."/>
            <person name="Bron S."/>
            <person name="Brouillet S."/>
            <person name="Bruschi C.V."/>
            <person name="Caldwell B."/>
            <person name="Capuano V."/>
            <person name="Carter N.M."/>
            <person name="Choi S.-K."/>
            <person name="Codani J.-J."/>
            <person name="Connerton I.F."/>
            <person name="Cummings N.J."/>
            <person name="Daniel R.A."/>
            <person name="Denizot F."/>
            <person name="Devine K.M."/>
            <person name="Duesterhoeft A."/>
            <person name="Ehrlich S.D."/>
            <person name="Emmerson P.T."/>
            <person name="Entian K.-D."/>
            <person name="Errington J."/>
            <person name="Fabret C."/>
            <person name="Ferrari E."/>
            <person name="Foulger D."/>
            <person name="Fritz C."/>
            <person name="Fujita M."/>
            <person name="Fujita Y."/>
            <person name="Fuma S."/>
            <person name="Galizzi A."/>
            <person name="Galleron N."/>
            <person name="Ghim S.-Y."/>
            <person name="Glaser P."/>
            <person name="Goffeau A."/>
            <person name="Golightly E.J."/>
            <person name="Grandi G."/>
            <person name="Guiseppi G."/>
            <person name="Guy B.J."/>
            <person name="Haga K."/>
            <person name="Haiech J."/>
            <person name="Harwood C.R."/>
            <person name="Henaut A."/>
            <person name="Hilbert H."/>
            <person name="Holsappel S."/>
            <person name="Hosono S."/>
            <person name="Hullo M.-F."/>
            <person name="Itaya M."/>
            <person name="Jones L.-M."/>
            <person name="Joris B."/>
            <person name="Karamata D."/>
            <person name="Kasahara Y."/>
            <person name="Klaerr-Blanchard M."/>
            <person name="Klein C."/>
            <person name="Kobayashi Y."/>
            <person name="Koetter P."/>
            <person name="Koningstein G."/>
            <person name="Krogh S."/>
            <person name="Kumano M."/>
            <person name="Kurita K."/>
            <person name="Lapidus A."/>
            <person name="Lardinois S."/>
            <person name="Lauber J."/>
            <person name="Lazarevic V."/>
            <person name="Lee S.-M."/>
            <person name="Levine A."/>
            <person name="Liu H."/>
            <person name="Masuda S."/>
            <person name="Mauel C."/>
            <person name="Medigue C."/>
            <person name="Medina N."/>
            <person name="Mellado R.P."/>
            <person name="Mizuno M."/>
            <person name="Moestl D."/>
            <person name="Nakai S."/>
            <person name="Noback M."/>
            <person name="Noone D."/>
            <person name="O'Reilly M."/>
            <person name="Ogawa K."/>
            <person name="Ogiwara A."/>
            <person name="Oudega B."/>
            <person name="Park S.-H."/>
            <person name="Parro V."/>
            <person name="Pohl T.M."/>
            <person name="Portetelle D."/>
            <person name="Porwollik S."/>
            <person name="Prescott A.M."/>
            <person name="Presecan E."/>
            <person name="Pujic P."/>
            <person name="Purnelle B."/>
            <person name="Rapoport G."/>
            <person name="Rey M."/>
            <person name="Reynolds S."/>
            <person name="Rieger M."/>
            <person name="Rivolta C."/>
            <person name="Rocha E."/>
            <person name="Roche B."/>
            <person name="Rose M."/>
            <person name="Sadaie Y."/>
            <person name="Sato T."/>
            <person name="Scanlan E."/>
            <person name="Schleich S."/>
            <person name="Schroeter R."/>
            <person name="Scoffone F."/>
            <person name="Sekiguchi J."/>
            <person name="Sekowska A."/>
            <person name="Seror S.J."/>
            <person name="Serror P."/>
            <person name="Shin B.-S."/>
            <person name="Soldo B."/>
            <person name="Sorokin A."/>
            <person name="Tacconi E."/>
            <person name="Takagi T."/>
            <person name="Takahashi H."/>
            <person name="Takemaru K."/>
            <person name="Takeuchi M."/>
            <person name="Tamakoshi A."/>
            <person name="Tanaka T."/>
            <person name="Terpstra P."/>
            <person name="Tognoni A."/>
            <person name="Tosato V."/>
            <person name="Uchiyama S."/>
            <person name="Vandenbol M."/>
            <person name="Vannier F."/>
            <person name="Vassarotti A."/>
            <person name="Viari A."/>
            <person name="Wambutt R."/>
            <person name="Wedler E."/>
            <person name="Wedler H."/>
            <person name="Weitzenegger T."/>
            <person name="Winters P."/>
            <person name="Wipat A."/>
            <person name="Yamamoto H."/>
            <person name="Yamane K."/>
            <person name="Yasumoto K."/>
            <person name="Yata K."/>
            <person name="Yoshida K."/>
            <person name="Yoshikawa H.-F."/>
            <person name="Zumstein E."/>
            <person name="Yoshikawa H."/>
            <person name="Danchin A."/>
        </authorList>
    </citation>
    <scope>NUCLEOTIDE SEQUENCE [LARGE SCALE GENOMIC DNA]</scope>
    <source>
        <strain>168</strain>
    </source>
</reference>
<reference key="3">
    <citation type="journal article" date="2003" name="Nucleic Acids Res.">
        <title>A nomenclature for restriction enzymes, DNA methyltransferases, homing endonucleases and their genes.</title>
        <authorList>
            <person name="Roberts R.J."/>
            <person name="Belfort M."/>
            <person name="Bestor T."/>
            <person name="Bhagwat A.S."/>
            <person name="Bickle T.A."/>
            <person name="Bitinaite J."/>
            <person name="Blumenthal R.M."/>
            <person name="Degtyarev S.K."/>
            <person name="Dryden D.T."/>
            <person name="Dybvig K."/>
            <person name="Firman K."/>
            <person name="Gromova E.S."/>
            <person name="Gumport R.I."/>
            <person name="Halford S.E."/>
            <person name="Hattman S."/>
            <person name="Heitman J."/>
            <person name="Hornby D.P."/>
            <person name="Janulaitis A."/>
            <person name="Jeltsch A."/>
            <person name="Josephsen J."/>
            <person name="Kiss A."/>
            <person name="Klaenhammer T.R."/>
            <person name="Kobayashi I."/>
            <person name="Kong H."/>
            <person name="Krueger D.H."/>
            <person name="Lacks S."/>
            <person name="Marinus M.G."/>
            <person name="Miyahara M."/>
            <person name="Morgan R.D."/>
            <person name="Murray N.E."/>
            <person name="Nagaraja V."/>
            <person name="Piekarowicz A."/>
            <person name="Pingoud A."/>
            <person name="Raleigh E."/>
            <person name="Rao D.N."/>
            <person name="Reich N."/>
            <person name="Repin V.E."/>
            <person name="Selker E.U."/>
            <person name="Shaw P.C."/>
            <person name="Stein D.C."/>
            <person name="Stoddard B.L."/>
            <person name="Szybalski W."/>
            <person name="Trautner T.A."/>
            <person name="Van Etten J.L."/>
            <person name="Vitor J.M."/>
            <person name="Wilson G.G."/>
            <person name="Xu S.Y."/>
        </authorList>
    </citation>
    <scope>NOMENCLATURE</scope>
    <scope>SUBTYPE</scope>
</reference>
<reference key="4">
    <citation type="journal article" date="2020" name="Nucleic Acids Res.">
        <title>Methyltransferase DnmA is responsible for genome-wide N6-methyladenosine modifications at non-palindromic recognition sites in Bacillus subtilis.</title>
        <authorList>
            <person name="Nye T.M."/>
            <person name="van Gijtenbeek L.A."/>
            <person name="Stevens A.G."/>
            <person name="Schroeder J.W."/>
            <person name="Randall J.R."/>
            <person name="Matthews L.A."/>
            <person name="Simmons L.A."/>
        </authorList>
    </citation>
    <scope>DNA METHYLATION</scope>
    <scope>FUNCTION</scope>
    <scope>DISRUPTION PHENOTYPE</scope>
    <scope>DNA-BINDING</scope>
    <scope>MUTAGENESIS OF TYR-465</scope>
    <source>
        <strain>168 / Marburg / ATCC 6051 / DSM 10 / JCM 1465 / NBRC 13719 / NCIMB 3610 / NRRL NRS-744 / VKM B-501</strain>
        <strain>168 / PY79</strain>
    </source>
</reference>
<gene>
    <name evidence="3" type="primary">dnmA</name>
    <name type="synonym">yeeA</name>
    <name type="ordered locus">BSU06760</name>
</gene>
<proteinExistence type="evidence at protein level"/>
<accession>O31504</accession>
<accession>O30579</accession>
<organism>
    <name type="scientific">Bacillus subtilis (strain 168)</name>
    <dbReference type="NCBI Taxonomy" id="224308"/>
    <lineage>
        <taxon>Bacteria</taxon>
        <taxon>Bacillati</taxon>
        <taxon>Bacillota</taxon>
        <taxon>Bacilli</taxon>
        <taxon>Bacillales</taxon>
        <taxon>Bacillaceae</taxon>
        <taxon>Bacillus</taxon>
    </lineage>
</organism>
<feature type="chain" id="PRO_0000387939" description="DNA methyltransferase A">
    <location>
        <begin position="1"/>
        <end position="879"/>
    </location>
</feature>
<feature type="mutagenesis site" description="Loss of methylase activity, still binds DNA." evidence="1">
    <original>Y</original>
    <variation>A</variation>
    <location>
        <position position="465"/>
    </location>
</feature>
<feature type="sequence conflict" description="In Ref. 1; AAB66474." evidence="4" ref="1">
    <original>Y</original>
    <variation>N</variation>
    <location>
        <position position="545"/>
    </location>
</feature>
<comment type="function">
    <text evidence="1 2">Recognizes the double-stranded sequence 5'-GACGAG-3' and methylates A-5, yielding m6A. m6A methylation functions as a transcriptional modifier, promoting transcription of a number of genes (at least scpA, hbs, rnhC, yumC and zapA). One studied mechanism is via transcriptional repressor ScoC (also called hpr) which binds to non-methylated scpA promoter; when the m6A target is methylated ScoC no longer binds and scpA transcription is up-regulated. Other mechanisms for gene expression regulation probably exist. Binds DNA with and without the target sequence. Although it resembles a restriction-modification system, it does not have detectable endonuclease activity under tested conditions (PubMed:32324221). A gamma subtype methylase (PubMed:12654995).</text>
</comment>
<comment type="catalytic activity">
    <reaction evidence="5">
        <text>a 2'-deoxyadenosine in DNA + S-adenosyl-L-methionine = an N(6)-methyl-2'-deoxyadenosine in DNA + S-adenosyl-L-homocysteine + H(+)</text>
        <dbReference type="Rhea" id="RHEA:15197"/>
        <dbReference type="Rhea" id="RHEA-COMP:12418"/>
        <dbReference type="Rhea" id="RHEA-COMP:12419"/>
        <dbReference type="ChEBI" id="CHEBI:15378"/>
        <dbReference type="ChEBI" id="CHEBI:57856"/>
        <dbReference type="ChEBI" id="CHEBI:59789"/>
        <dbReference type="ChEBI" id="CHEBI:90615"/>
        <dbReference type="ChEBI" id="CHEBI:90616"/>
        <dbReference type="EC" id="2.1.1.72"/>
    </reaction>
</comment>
<comment type="disruption phenotype">
    <text evidence="1">No visible growth defects, no A-5 methylation of 5'-GACGAG-3' in strains NCIMB 3610 or PY79. Decreased promoter activity for promoters with the target sequence very close to the -35 SigA-binding box (scpA, hbs, rnhC, yumC and zapA).</text>
</comment>
<comment type="miscellaneous">
    <text evidence="1">Between 94.7% and 99.7% of the 5'-GACGAG-3' motifs are methylated on A-5 in strain NCIMB 3610 and PY79 respectively. The sites are enriched on the left chromosomal arm.</text>
</comment>
<comment type="similarity">
    <text evidence="4">Belongs to the methyltransferase superfamily.</text>
</comment>